<protein>
    <recommendedName>
        <fullName evidence="1">Aspartate--tRNA ligase</fullName>
        <ecNumber evidence="1">6.1.1.12</ecNumber>
    </recommendedName>
    <alternativeName>
        <fullName evidence="1">Aspartyl-tRNA synthetase</fullName>
        <shortName evidence="1">AspRS</shortName>
    </alternativeName>
</protein>
<sequence>MKRSMYAGRVREEHIGTTITLKGWVSRRRDLGGLIFIDLRDREGVMQLVINPEEVSSDVMATAERLRSEYVIEVEGFVEARQQANDKLATGMVELKVSALTILNTAKTTPFEIKDDAEVSDDTRLRYRYLDLRRPEMLENFKLRAKVTHSIRNYLDDLEFIDVETPMLTKSTPEGARDYLVPSRVSQGHFYALPQSPQITKQLLMNAGFDRYYQIVKCFRDEDLRGDRQPEFTQVDLETSFLSEQEIQDIVEGMIAKVMKETKEIDVTLPFPRMSYDVAMNSYGSDKPDTRFEMLLQDLTVTVKGIDFKVFSEAPAVKAIVVKGNADRYSRKDIDKLTEFAKQFGAKGLAWVKVTDGQFSGPVAKFLTAIETELSSQLKLAENDLVLFVADTLEVANNTLGALRNRIAKDLDMIDQSQFNFLWVVDWPMFEWSEEEGRYMSAHHPFTLPTPESAHELEGDLAKVRAIAYDIVLNGYELGGGSLRINQKEMQERMFKALGFTADEANDQFGFLLEAMDYGFPPHGGLAIGLDRFVMLLAEKDNIREVIAFPKNNKASDPMTQAPSLVSENQLEELSLQIESHD</sequence>
<accession>A2RGY0</accession>
<feature type="chain" id="PRO_1000006769" description="Aspartate--tRNA ligase">
    <location>
        <begin position="1"/>
        <end position="582"/>
    </location>
</feature>
<feature type="region of interest" description="Aspartate" evidence="1">
    <location>
        <begin position="198"/>
        <end position="201"/>
    </location>
</feature>
<feature type="binding site" evidence="1">
    <location>
        <position position="174"/>
    </location>
    <ligand>
        <name>L-aspartate</name>
        <dbReference type="ChEBI" id="CHEBI:29991"/>
    </ligand>
</feature>
<feature type="binding site" evidence="1">
    <location>
        <begin position="220"/>
        <end position="222"/>
    </location>
    <ligand>
        <name>ATP</name>
        <dbReference type="ChEBI" id="CHEBI:30616"/>
    </ligand>
</feature>
<feature type="binding site" evidence="1">
    <location>
        <position position="220"/>
    </location>
    <ligand>
        <name>L-aspartate</name>
        <dbReference type="ChEBI" id="CHEBI:29991"/>
    </ligand>
</feature>
<feature type="binding site" evidence="1">
    <location>
        <position position="229"/>
    </location>
    <ligand>
        <name>ATP</name>
        <dbReference type="ChEBI" id="CHEBI:30616"/>
    </ligand>
</feature>
<feature type="binding site" evidence="1">
    <location>
        <position position="443"/>
    </location>
    <ligand>
        <name>L-aspartate</name>
        <dbReference type="ChEBI" id="CHEBI:29991"/>
    </ligand>
</feature>
<feature type="binding site" evidence="1">
    <location>
        <position position="477"/>
    </location>
    <ligand>
        <name>ATP</name>
        <dbReference type="ChEBI" id="CHEBI:30616"/>
    </ligand>
</feature>
<feature type="binding site" evidence="1">
    <location>
        <position position="484"/>
    </location>
    <ligand>
        <name>L-aspartate</name>
        <dbReference type="ChEBI" id="CHEBI:29991"/>
    </ligand>
</feature>
<feature type="binding site" evidence="1">
    <location>
        <begin position="529"/>
        <end position="532"/>
    </location>
    <ligand>
        <name>ATP</name>
        <dbReference type="ChEBI" id="CHEBI:30616"/>
    </ligand>
</feature>
<dbReference type="EC" id="6.1.1.12" evidence="1"/>
<dbReference type="EMBL" id="AM295007">
    <property type="protein sequence ID" value="CAM31112.1"/>
    <property type="molecule type" value="Genomic_DNA"/>
</dbReference>
<dbReference type="RefSeq" id="WP_011889241.1">
    <property type="nucleotide sequence ID" value="NC_009332.1"/>
</dbReference>
<dbReference type="SMR" id="A2RGY0"/>
<dbReference type="KEGG" id="spf:SpyM51788"/>
<dbReference type="HOGENOM" id="CLU_014330_3_2_9"/>
<dbReference type="GO" id="GO:0005737">
    <property type="term" value="C:cytoplasm"/>
    <property type="evidence" value="ECO:0007669"/>
    <property type="project" value="UniProtKB-SubCell"/>
</dbReference>
<dbReference type="GO" id="GO:0004815">
    <property type="term" value="F:aspartate-tRNA ligase activity"/>
    <property type="evidence" value="ECO:0007669"/>
    <property type="project" value="UniProtKB-UniRule"/>
</dbReference>
<dbReference type="GO" id="GO:0005524">
    <property type="term" value="F:ATP binding"/>
    <property type="evidence" value="ECO:0007669"/>
    <property type="project" value="UniProtKB-UniRule"/>
</dbReference>
<dbReference type="GO" id="GO:0140096">
    <property type="term" value="F:catalytic activity, acting on a protein"/>
    <property type="evidence" value="ECO:0007669"/>
    <property type="project" value="UniProtKB-ARBA"/>
</dbReference>
<dbReference type="GO" id="GO:0003676">
    <property type="term" value="F:nucleic acid binding"/>
    <property type="evidence" value="ECO:0007669"/>
    <property type="project" value="InterPro"/>
</dbReference>
<dbReference type="GO" id="GO:0016740">
    <property type="term" value="F:transferase activity"/>
    <property type="evidence" value="ECO:0007669"/>
    <property type="project" value="UniProtKB-ARBA"/>
</dbReference>
<dbReference type="GO" id="GO:0006422">
    <property type="term" value="P:aspartyl-tRNA aminoacylation"/>
    <property type="evidence" value="ECO:0007669"/>
    <property type="project" value="UniProtKB-UniRule"/>
</dbReference>
<dbReference type="CDD" id="cd00777">
    <property type="entry name" value="AspRS_core"/>
    <property type="match status" value="1"/>
</dbReference>
<dbReference type="CDD" id="cd04317">
    <property type="entry name" value="EcAspRS_like_N"/>
    <property type="match status" value="1"/>
</dbReference>
<dbReference type="Gene3D" id="3.30.930.10">
    <property type="entry name" value="Bira Bifunctional Protein, Domain 2"/>
    <property type="match status" value="1"/>
</dbReference>
<dbReference type="Gene3D" id="3.30.1360.30">
    <property type="entry name" value="GAD-like domain"/>
    <property type="match status" value="1"/>
</dbReference>
<dbReference type="Gene3D" id="2.40.50.140">
    <property type="entry name" value="Nucleic acid-binding proteins"/>
    <property type="match status" value="1"/>
</dbReference>
<dbReference type="HAMAP" id="MF_00044">
    <property type="entry name" value="Asp_tRNA_synth_type1"/>
    <property type="match status" value="1"/>
</dbReference>
<dbReference type="InterPro" id="IPR004364">
    <property type="entry name" value="Aa-tRNA-synt_II"/>
</dbReference>
<dbReference type="InterPro" id="IPR006195">
    <property type="entry name" value="aa-tRNA-synth_II"/>
</dbReference>
<dbReference type="InterPro" id="IPR045864">
    <property type="entry name" value="aa-tRNA-synth_II/BPL/LPL"/>
</dbReference>
<dbReference type="InterPro" id="IPR004524">
    <property type="entry name" value="Asp-tRNA-ligase_1"/>
</dbReference>
<dbReference type="InterPro" id="IPR047089">
    <property type="entry name" value="Asp-tRNA-ligase_1_N"/>
</dbReference>
<dbReference type="InterPro" id="IPR002312">
    <property type="entry name" value="Asp/Asn-tRNA-synth_IIb"/>
</dbReference>
<dbReference type="InterPro" id="IPR047090">
    <property type="entry name" value="AspRS_core"/>
</dbReference>
<dbReference type="InterPro" id="IPR004115">
    <property type="entry name" value="GAD-like_sf"/>
</dbReference>
<dbReference type="InterPro" id="IPR029351">
    <property type="entry name" value="GAD_dom"/>
</dbReference>
<dbReference type="InterPro" id="IPR012340">
    <property type="entry name" value="NA-bd_OB-fold"/>
</dbReference>
<dbReference type="InterPro" id="IPR004365">
    <property type="entry name" value="NA-bd_OB_tRNA"/>
</dbReference>
<dbReference type="NCBIfam" id="TIGR00459">
    <property type="entry name" value="aspS_bact"/>
    <property type="match status" value="1"/>
</dbReference>
<dbReference type="NCBIfam" id="NF001750">
    <property type="entry name" value="PRK00476.1"/>
    <property type="match status" value="1"/>
</dbReference>
<dbReference type="PANTHER" id="PTHR22594:SF5">
    <property type="entry name" value="ASPARTATE--TRNA LIGASE, MITOCHONDRIAL"/>
    <property type="match status" value="1"/>
</dbReference>
<dbReference type="PANTHER" id="PTHR22594">
    <property type="entry name" value="ASPARTYL/LYSYL-TRNA SYNTHETASE"/>
    <property type="match status" value="1"/>
</dbReference>
<dbReference type="Pfam" id="PF02938">
    <property type="entry name" value="GAD"/>
    <property type="match status" value="1"/>
</dbReference>
<dbReference type="Pfam" id="PF00152">
    <property type="entry name" value="tRNA-synt_2"/>
    <property type="match status" value="1"/>
</dbReference>
<dbReference type="Pfam" id="PF01336">
    <property type="entry name" value="tRNA_anti-codon"/>
    <property type="match status" value="1"/>
</dbReference>
<dbReference type="PRINTS" id="PR01042">
    <property type="entry name" value="TRNASYNTHASP"/>
</dbReference>
<dbReference type="SUPFAM" id="SSF55681">
    <property type="entry name" value="Class II aaRS and biotin synthetases"/>
    <property type="match status" value="1"/>
</dbReference>
<dbReference type="SUPFAM" id="SSF55261">
    <property type="entry name" value="GAD domain-like"/>
    <property type="match status" value="1"/>
</dbReference>
<dbReference type="SUPFAM" id="SSF50249">
    <property type="entry name" value="Nucleic acid-binding proteins"/>
    <property type="match status" value="1"/>
</dbReference>
<dbReference type="PROSITE" id="PS50862">
    <property type="entry name" value="AA_TRNA_LIGASE_II"/>
    <property type="match status" value="1"/>
</dbReference>
<comment type="function">
    <text evidence="1">Catalyzes the attachment of L-aspartate to tRNA(Asp) in a two-step reaction: L-aspartate is first activated by ATP to form Asp-AMP and then transferred to the acceptor end of tRNA(Asp).</text>
</comment>
<comment type="catalytic activity">
    <reaction evidence="1">
        <text>tRNA(Asp) + L-aspartate + ATP = L-aspartyl-tRNA(Asp) + AMP + diphosphate</text>
        <dbReference type="Rhea" id="RHEA:19649"/>
        <dbReference type="Rhea" id="RHEA-COMP:9660"/>
        <dbReference type="Rhea" id="RHEA-COMP:9678"/>
        <dbReference type="ChEBI" id="CHEBI:29991"/>
        <dbReference type="ChEBI" id="CHEBI:30616"/>
        <dbReference type="ChEBI" id="CHEBI:33019"/>
        <dbReference type="ChEBI" id="CHEBI:78442"/>
        <dbReference type="ChEBI" id="CHEBI:78516"/>
        <dbReference type="ChEBI" id="CHEBI:456215"/>
        <dbReference type="EC" id="6.1.1.12"/>
    </reaction>
</comment>
<comment type="subunit">
    <text evidence="1">Homodimer.</text>
</comment>
<comment type="subcellular location">
    <subcellularLocation>
        <location evidence="1">Cytoplasm</location>
    </subcellularLocation>
</comment>
<comment type="similarity">
    <text evidence="1">Belongs to the class-II aminoacyl-tRNA synthetase family. Type 1 subfamily.</text>
</comment>
<evidence type="ECO:0000255" key="1">
    <source>
        <dbReference type="HAMAP-Rule" id="MF_00044"/>
    </source>
</evidence>
<gene>
    <name evidence="1" type="primary">aspS</name>
    <name type="ordered locus">SpyM51788</name>
</gene>
<name>SYD_STRPG</name>
<proteinExistence type="inferred from homology"/>
<reference key="1">
    <citation type="journal article" date="2007" name="J. Bacteriol.">
        <title>Complete genome of acute rheumatic fever-associated serotype M5 Streptococcus pyogenes strain Manfredo.</title>
        <authorList>
            <person name="Holden M.T.G."/>
            <person name="Scott A."/>
            <person name="Cherevach I."/>
            <person name="Chillingworth T."/>
            <person name="Churcher C."/>
            <person name="Cronin A."/>
            <person name="Dowd L."/>
            <person name="Feltwell T."/>
            <person name="Hamlin N."/>
            <person name="Holroyd S."/>
            <person name="Jagels K."/>
            <person name="Moule S."/>
            <person name="Mungall K."/>
            <person name="Quail M.A."/>
            <person name="Price C."/>
            <person name="Rabbinowitsch E."/>
            <person name="Sharp S."/>
            <person name="Skelton J."/>
            <person name="Whitehead S."/>
            <person name="Barrell B.G."/>
            <person name="Kehoe M."/>
            <person name="Parkhill J."/>
        </authorList>
    </citation>
    <scope>NUCLEOTIDE SEQUENCE [LARGE SCALE GENOMIC DNA]</scope>
    <source>
        <strain>Manfredo</strain>
    </source>
</reference>
<organism>
    <name type="scientific">Streptococcus pyogenes serotype M5 (strain Manfredo)</name>
    <dbReference type="NCBI Taxonomy" id="160491"/>
    <lineage>
        <taxon>Bacteria</taxon>
        <taxon>Bacillati</taxon>
        <taxon>Bacillota</taxon>
        <taxon>Bacilli</taxon>
        <taxon>Lactobacillales</taxon>
        <taxon>Streptococcaceae</taxon>
        <taxon>Streptococcus</taxon>
    </lineage>
</organism>
<keyword id="KW-0030">Aminoacyl-tRNA synthetase</keyword>
<keyword id="KW-0067">ATP-binding</keyword>
<keyword id="KW-0963">Cytoplasm</keyword>
<keyword id="KW-0436">Ligase</keyword>
<keyword id="KW-0547">Nucleotide-binding</keyword>
<keyword id="KW-0648">Protein biosynthesis</keyword>